<organism>
    <name type="scientific">Sinorhizobium medicae (strain WSM419)</name>
    <name type="common">Ensifer medicae</name>
    <dbReference type="NCBI Taxonomy" id="366394"/>
    <lineage>
        <taxon>Bacteria</taxon>
        <taxon>Pseudomonadati</taxon>
        <taxon>Pseudomonadota</taxon>
        <taxon>Alphaproteobacteria</taxon>
        <taxon>Hyphomicrobiales</taxon>
        <taxon>Rhizobiaceae</taxon>
        <taxon>Sinorhizobium/Ensifer group</taxon>
        <taxon>Sinorhizobium</taxon>
    </lineage>
</organism>
<proteinExistence type="inferred from homology"/>
<protein>
    <recommendedName>
        <fullName evidence="1">Glutamate--tRNA ligase</fullName>
        <ecNumber evidence="1">6.1.1.17</ecNumber>
    </recommendedName>
    <alternativeName>
        <fullName evidence="1">Glutamyl-tRNA synthetase</fullName>
        <shortName evidence="1">GluRS</shortName>
    </alternativeName>
</protein>
<comment type="function">
    <text evidence="1">Catalyzes the attachment of glutamate to tRNA(Glu) in a two-step reaction: glutamate is first activated by ATP to form Glu-AMP and then transferred to the acceptor end of tRNA(Glu).</text>
</comment>
<comment type="catalytic activity">
    <reaction evidence="1">
        <text>tRNA(Glu) + L-glutamate + ATP = L-glutamyl-tRNA(Glu) + AMP + diphosphate</text>
        <dbReference type="Rhea" id="RHEA:23540"/>
        <dbReference type="Rhea" id="RHEA-COMP:9663"/>
        <dbReference type="Rhea" id="RHEA-COMP:9680"/>
        <dbReference type="ChEBI" id="CHEBI:29985"/>
        <dbReference type="ChEBI" id="CHEBI:30616"/>
        <dbReference type="ChEBI" id="CHEBI:33019"/>
        <dbReference type="ChEBI" id="CHEBI:78442"/>
        <dbReference type="ChEBI" id="CHEBI:78520"/>
        <dbReference type="ChEBI" id="CHEBI:456215"/>
        <dbReference type="EC" id="6.1.1.17"/>
    </reaction>
</comment>
<comment type="subunit">
    <text evidence="1">Monomer.</text>
</comment>
<comment type="subcellular location">
    <subcellularLocation>
        <location evidence="1">Cytoplasm</location>
    </subcellularLocation>
</comment>
<comment type="similarity">
    <text evidence="1">Belongs to the class-I aminoacyl-tRNA synthetase family. Glutamate--tRNA ligase type 1 subfamily.</text>
</comment>
<sequence>MADSAVRVRIAPSPTGEPHVGTAYIALFNYLFAKKHGGEFILRIEDTDATRSTPEFEKKVLDALKWCGLEWSEGPDIGGPCGPYRQSDRKDIYKPYVEQIVANGHGFRCFCTPERLEQMREAQRAAGKPPKYDGLCLSLSAEEVTSRVAAGEPHVVRMKIPTEGSCKFRDGVYGDVEIPWEAVDMQVLLKADGMPTYHMANVVDDHLMKITHVARGEEWLASVPKHILIYQYLGLEPPVFMHLSLMRNADKSKLSKRKNPTSISYYTALGYLPEALMNFLGLFFIQIAEGEELLTMAELAEKFDPENLSKAGAIFDIQKLDWLNARWIREKLSEEQFAAKVLSWAMDNDRLREGLKLSQTRISKLGELPDLAAFLFKSDLGLQPAAFAGVKASPEEMLEILNTVQPDLEKILEWNKESIETELRACAERMGKKLKAVVAPLFVAVSGSQRSLPLFDSMELLGRSVVRQRLKVAAQVVASMAGSGK</sequence>
<evidence type="ECO:0000255" key="1">
    <source>
        <dbReference type="HAMAP-Rule" id="MF_00022"/>
    </source>
</evidence>
<feature type="chain" id="PRO_0000330998" description="Glutamate--tRNA ligase">
    <location>
        <begin position="1"/>
        <end position="485"/>
    </location>
</feature>
<feature type="short sequence motif" description="'HIGH' region" evidence="1">
    <location>
        <begin position="12"/>
        <end position="22"/>
    </location>
</feature>
<feature type="short sequence motif" description="'KMSKS' region" evidence="1">
    <location>
        <begin position="253"/>
        <end position="257"/>
    </location>
</feature>
<feature type="binding site" evidence="1">
    <location>
        <position position="256"/>
    </location>
    <ligand>
        <name>ATP</name>
        <dbReference type="ChEBI" id="CHEBI:30616"/>
    </ligand>
</feature>
<accession>A6UD99</accession>
<name>SYE_SINMW</name>
<keyword id="KW-0030">Aminoacyl-tRNA synthetase</keyword>
<keyword id="KW-0067">ATP-binding</keyword>
<keyword id="KW-0963">Cytoplasm</keyword>
<keyword id="KW-0436">Ligase</keyword>
<keyword id="KW-0547">Nucleotide-binding</keyword>
<keyword id="KW-0648">Protein biosynthesis</keyword>
<reference key="1">
    <citation type="submission" date="2007-06" db="EMBL/GenBank/DDBJ databases">
        <title>Complete sequence of Sinorhizobium medicae WSM419 chromosome.</title>
        <authorList>
            <consortium name="US DOE Joint Genome Institute"/>
            <person name="Copeland A."/>
            <person name="Lucas S."/>
            <person name="Lapidus A."/>
            <person name="Barry K."/>
            <person name="Glavina del Rio T."/>
            <person name="Dalin E."/>
            <person name="Tice H."/>
            <person name="Pitluck S."/>
            <person name="Chain P."/>
            <person name="Malfatti S."/>
            <person name="Shin M."/>
            <person name="Vergez L."/>
            <person name="Schmutz J."/>
            <person name="Larimer F."/>
            <person name="Land M."/>
            <person name="Hauser L."/>
            <person name="Kyrpides N."/>
            <person name="Mikhailova N."/>
            <person name="Reeve W.G."/>
            <person name="Richardson P."/>
        </authorList>
    </citation>
    <scope>NUCLEOTIDE SEQUENCE [LARGE SCALE GENOMIC DNA]</scope>
    <source>
        <strain>WSM419</strain>
    </source>
</reference>
<gene>
    <name evidence="1" type="primary">gltX</name>
    <name type="ordered locus">Smed_2799</name>
</gene>
<dbReference type="EC" id="6.1.1.17" evidence="1"/>
<dbReference type="EMBL" id="CP000738">
    <property type="protein sequence ID" value="ABR61629.1"/>
    <property type="molecule type" value="Genomic_DNA"/>
</dbReference>
<dbReference type="RefSeq" id="WP_012067014.1">
    <property type="nucleotide sequence ID" value="NC_009636.1"/>
</dbReference>
<dbReference type="RefSeq" id="YP_001328464.1">
    <property type="nucleotide sequence ID" value="NC_009636.1"/>
</dbReference>
<dbReference type="SMR" id="A6UD99"/>
<dbReference type="STRING" id="366394.Smed_2799"/>
<dbReference type="GeneID" id="61611669"/>
<dbReference type="KEGG" id="smd:Smed_2799"/>
<dbReference type="PATRIC" id="fig|366394.8.peg.6006"/>
<dbReference type="eggNOG" id="COG0008">
    <property type="taxonomic scope" value="Bacteria"/>
</dbReference>
<dbReference type="HOGENOM" id="CLU_015768_6_3_5"/>
<dbReference type="OrthoDB" id="9807503at2"/>
<dbReference type="Proteomes" id="UP000001108">
    <property type="component" value="Chromosome"/>
</dbReference>
<dbReference type="GO" id="GO:0005829">
    <property type="term" value="C:cytosol"/>
    <property type="evidence" value="ECO:0007669"/>
    <property type="project" value="TreeGrafter"/>
</dbReference>
<dbReference type="GO" id="GO:0005524">
    <property type="term" value="F:ATP binding"/>
    <property type="evidence" value="ECO:0007669"/>
    <property type="project" value="UniProtKB-UniRule"/>
</dbReference>
<dbReference type="GO" id="GO:0004818">
    <property type="term" value="F:glutamate-tRNA ligase activity"/>
    <property type="evidence" value="ECO:0007669"/>
    <property type="project" value="UniProtKB-UniRule"/>
</dbReference>
<dbReference type="GO" id="GO:0000049">
    <property type="term" value="F:tRNA binding"/>
    <property type="evidence" value="ECO:0007669"/>
    <property type="project" value="InterPro"/>
</dbReference>
<dbReference type="GO" id="GO:0008270">
    <property type="term" value="F:zinc ion binding"/>
    <property type="evidence" value="ECO:0007669"/>
    <property type="project" value="InterPro"/>
</dbReference>
<dbReference type="GO" id="GO:0006424">
    <property type="term" value="P:glutamyl-tRNA aminoacylation"/>
    <property type="evidence" value="ECO:0007669"/>
    <property type="project" value="UniProtKB-UniRule"/>
</dbReference>
<dbReference type="CDD" id="cd00808">
    <property type="entry name" value="GluRS_core"/>
    <property type="match status" value="1"/>
</dbReference>
<dbReference type="FunFam" id="3.40.50.620:FF:000045">
    <property type="entry name" value="Glutamate--tRNA ligase, mitochondrial"/>
    <property type="match status" value="1"/>
</dbReference>
<dbReference type="Gene3D" id="1.10.10.350">
    <property type="match status" value="1"/>
</dbReference>
<dbReference type="Gene3D" id="3.40.50.620">
    <property type="entry name" value="HUPs"/>
    <property type="match status" value="1"/>
</dbReference>
<dbReference type="HAMAP" id="MF_00022">
    <property type="entry name" value="Glu_tRNA_synth_type1"/>
    <property type="match status" value="1"/>
</dbReference>
<dbReference type="InterPro" id="IPR045462">
    <property type="entry name" value="aa-tRNA-synth_I_cd-bd"/>
</dbReference>
<dbReference type="InterPro" id="IPR020751">
    <property type="entry name" value="aa-tRNA-synth_I_codon-bd_sub2"/>
</dbReference>
<dbReference type="InterPro" id="IPR001412">
    <property type="entry name" value="aa-tRNA-synth_I_CS"/>
</dbReference>
<dbReference type="InterPro" id="IPR008925">
    <property type="entry name" value="aa_tRNA-synth_I_cd-bd_sf"/>
</dbReference>
<dbReference type="InterPro" id="IPR004527">
    <property type="entry name" value="Glu-tRNA-ligase_bac/mito"/>
</dbReference>
<dbReference type="InterPro" id="IPR000924">
    <property type="entry name" value="Glu/Gln-tRNA-synth"/>
</dbReference>
<dbReference type="InterPro" id="IPR020058">
    <property type="entry name" value="Glu/Gln-tRNA-synth_Ib_cat-dom"/>
</dbReference>
<dbReference type="InterPro" id="IPR049940">
    <property type="entry name" value="GluQ/Sye"/>
</dbReference>
<dbReference type="InterPro" id="IPR033910">
    <property type="entry name" value="GluRS_core"/>
</dbReference>
<dbReference type="InterPro" id="IPR014729">
    <property type="entry name" value="Rossmann-like_a/b/a_fold"/>
</dbReference>
<dbReference type="NCBIfam" id="TIGR00464">
    <property type="entry name" value="gltX_bact"/>
    <property type="match status" value="1"/>
</dbReference>
<dbReference type="PANTHER" id="PTHR43311">
    <property type="entry name" value="GLUTAMATE--TRNA LIGASE"/>
    <property type="match status" value="1"/>
</dbReference>
<dbReference type="PANTHER" id="PTHR43311:SF2">
    <property type="entry name" value="GLUTAMATE--TRNA LIGASE, MITOCHONDRIAL-RELATED"/>
    <property type="match status" value="1"/>
</dbReference>
<dbReference type="Pfam" id="PF19269">
    <property type="entry name" value="Anticodon_2"/>
    <property type="match status" value="1"/>
</dbReference>
<dbReference type="Pfam" id="PF00749">
    <property type="entry name" value="tRNA-synt_1c"/>
    <property type="match status" value="1"/>
</dbReference>
<dbReference type="PRINTS" id="PR00987">
    <property type="entry name" value="TRNASYNTHGLU"/>
</dbReference>
<dbReference type="SUPFAM" id="SSF48163">
    <property type="entry name" value="An anticodon-binding domain of class I aminoacyl-tRNA synthetases"/>
    <property type="match status" value="1"/>
</dbReference>
<dbReference type="SUPFAM" id="SSF52374">
    <property type="entry name" value="Nucleotidylyl transferase"/>
    <property type="match status" value="1"/>
</dbReference>
<dbReference type="PROSITE" id="PS00178">
    <property type="entry name" value="AA_TRNA_LIGASE_I"/>
    <property type="match status" value="1"/>
</dbReference>